<gene>
    <name evidence="1" type="primary">rimM</name>
    <name type="ordered locus">Sbal_1211</name>
</gene>
<sequence length="176" mass="19932">MSSNQQPVVLGKLGSCHGIKGWLKITAYTDSVEGIFDYSPWLIKENGEWREIKVTQWRYQGKAVVALLDGVETREQAQMLTNCEIAILPEQMNDLPADEFYWRDLIGCEVVNTTGYNMGIVDQIVETGSNDVLLVKANAKDSFGKVERMIPFVPEQFIKTVDLQGKQILVDWDPDF</sequence>
<comment type="function">
    <text evidence="1">An accessory protein needed during the final step in the assembly of 30S ribosomal subunit, possibly for assembly of the head region. Essential for efficient processing of 16S rRNA. May be needed both before and after RbfA during the maturation of 16S rRNA. It has affinity for free ribosomal 30S subunits but not for 70S ribosomes.</text>
</comment>
<comment type="subunit">
    <text evidence="1">Binds ribosomal protein uS19.</text>
</comment>
<comment type="subcellular location">
    <subcellularLocation>
        <location evidence="1">Cytoplasm</location>
    </subcellularLocation>
</comment>
<comment type="domain">
    <text evidence="1">The PRC barrel domain binds ribosomal protein uS19.</text>
</comment>
<comment type="similarity">
    <text evidence="1">Belongs to the RimM family.</text>
</comment>
<name>RIMM_SHEB5</name>
<protein>
    <recommendedName>
        <fullName evidence="1">Ribosome maturation factor RimM</fullName>
    </recommendedName>
</protein>
<dbReference type="EMBL" id="CP000563">
    <property type="protein sequence ID" value="ABN60729.1"/>
    <property type="molecule type" value="Genomic_DNA"/>
</dbReference>
<dbReference type="RefSeq" id="WP_006080789.1">
    <property type="nucleotide sequence ID" value="NC_009052.1"/>
</dbReference>
<dbReference type="SMR" id="A3D1W6"/>
<dbReference type="STRING" id="325240.Sbal_1211"/>
<dbReference type="GeneID" id="11771556"/>
<dbReference type="KEGG" id="sbl:Sbal_1211"/>
<dbReference type="HOGENOM" id="CLU_077636_1_0_6"/>
<dbReference type="OrthoDB" id="9783509at2"/>
<dbReference type="Proteomes" id="UP000001557">
    <property type="component" value="Chromosome"/>
</dbReference>
<dbReference type="GO" id="GO:0005737">
    <property type="term" value="C:cytoplasm"/>
    <property type="evidence" value="ECO:0007669"/>
    <property type="project" value="UniProtKB-SubCell"/>
</dbReference>
<dbReference type="GO" id="GO:0005840">
    <property type="term" value="C:ribosome"/>
    <property type="evidence" value="ECO:0007669"/>
    <property type="project" value="InterPro"/>
</dbReference>
<dbReference type="GO" id="GO:0043022">
    <property type="term" value="F:ribosome binding"/>
    <property type="evidence" value="ECO:0007669"/>
    <property type="project" value="InterPro"/>
</dbReference>
<dbReference type="GO" id="GO:0042274">
    <property type="term" value="P:ribosomal small subunit biogenesis"/>
    <property type="evidence" value="ECO:0007669"/>
    <property type="project" value="UniProtKB-UniRule"/>
</dbReference>
<dbReference type="GO" id="GO:0006364">
    <property type="term" value="P:rRNA processing"/>
    <property type="evidence" value="ECO:0007669"/>
    <property type="project" value="UniProtKB-UniRule"/>
</dbReference>
<dbReference type="Gene3D" id="2.30.30.240">
    <property type="entry name" value="PRC-barrel domain"/>
    <property type="match status" value="1"/>
</dbReference>
<dbReference type="Gene3D" id="2.40.30.60">
    <property type="entry name" value="RimM"/>
    <property type="match status" value="1"/>
</dbReference>
<dbReference type="HAMAP" id="MF_00014">
    <property type="entry name" value="Ribosome_mat_RimM"/>
    <property type="match status" value="1"/>
</dbReference>
<dbReference type="InterPro" id="IPR011033">
    <property type="entry name" value="PRC_barrel-like_sf"/>
</dbReference>
<dbReference type="InterPro" id="IPR056792">
    <property type="entry name" value="PRC_RimM"/>
</dbReference>
<dbReference type="InterPro" id="IPR011961">
    <property type="entry name" value="RimM"/>
</dbReference>
<dbReference type="InterPro" id="IPR002676">
    <property type="entry name" value="RimM_N"/>
</dbReference>
<dbReference type="InterPro" id="IPR036976">
    <property type="entry name" value="RimM_N_sf"/>
</dbReference>
<dbReference type="InterPro" id="IPR009000">
    <property type="entry name" value="Transl_B-barrel_sf"/>
</dbReference>
<dbReference type="NCBIfam" id="TIGR02273">
    <property type="entry name" value="16S_RimM"/>
    <property type="match status" value="1"/>
</dbReference>
<dbReference type="PANTHER" id="PTHR33692">
    <property type="entry name" value="RIBOSOME MATURATION FACTOR RIMM"/>
    <property type="match status" value="1"/>
</dbReference>
<dbReference type="PANTHER" id="PTHR33692:SF1">
    <property type="entry name" value="RIBOSOME MATURATION FACTOR RIMM"/>
    <property type="match status" value="1"/>
</dbReference>
<dbReference type="Pfam" id="PF24986">
    <property type="entry name" value="PRC_RimM"/>
    <property type="match status" value="1"/>
</dbReference>
<dbReference type="Pfam" id="PF01782">
    <property type="entry name" value="RimM"/>
    <property type="match status" value="1"/>
</dbReference>
<dbReference type="SUPFAM" id="SSF50346">
    <property type="entry name" value="PRC-barrel domain"/>
    <property type="match status" value="1"/>
</dbReference>
<dbReference type="SUPFAM" id="SSF50447">
    <property type="entry name" value="Translation proteins"/>
    <property type="match status" value="1"/>
</dbReference>
<feature type="chain" id="PRO_0000321753" description="Ribosome maturation factor RimM">
    <location>
        <begin position="1"/>
        <end position="176"/>
    </location>
</feature>
<feature type="domain" description="PRC barrel" evidence="1">
    <location>
        <begin position="97"/>
        <end position="176"/>
    </location>
</feature>
<evidence type="ECO:0000255" key="1">
    <source>
        <dbReference type="HAMAP-Rule" id="MF_00014"/>
    </source>
</evidence>
<accession>A3D1W6</accession>
<organism>
    <name type="scientific">Shewanella baltica (strain OS155 / ATCC BAA-1091)</name>
    <dbReference type="NCBI Taxonomy" id="325240"/>
    <lineage>
        <taxon>Bacteria</taxon>
        <taxon>Pseudomonadati</taxon>
        <taxon>Pseudomonadota</taxon>
        <taxon>Gammaproteobacteria</taxon>
        <taxon>Alteromonadales</taxon>
        <taxon>Shewanellaceae</taxon>
        <taxon>Shewanella</taxon>
    </lineage>
</organism>
<proteinExistence type="inferred from homology"/>
<reference key="1">
    <citation type="submission" date="2007-02" db="EMBL/GenBank/DDBJ databases">
        <title>Complete sequence of chromosome of Shewanella baltica OS155.</title>
        <authorList>
            <consortium name="US DOE Joint Genome Institute"/>
            <person name="Copeland A."/>
            <person name="Lucas S."/>
            <person name="Lapidus A."/>
            <person name="Barry K."/>
            <person name="Detter J.C."/>
            <person name="Glavina del Rio T."/>
            <person name="Hammon N."/>
            <person name="Israni S."/>
            <person name="Dalin E."/>
            <person name="Tice H."/>
            <person name="Pitluck S."/>
            <person name="Sims D.R."/>
            <person name="Brettin T."/>
            <person name="Bruce D."/>
            <person name="Han C."/>
            <person name="Tapia R."/>
            <person name="Brainard J."/>
            <person name="Schmutz J."/>
            <person name="Larimer F."/>
            <person name="Land M."/>
            <person name="Hauser L."/>
            <person name="Kyrpides N."/>
            <person name="Mikhailova N."/>
            <person name="Brettar I."/>
            <person name="Klappenbach J."/>
            <person name="Konstantinidis K."/>
            <person name="Rodrigues J."/>
            <person name="Tiedje J."/>
            <person name="Richardson P."/>
        </authorList>
    </citation>
    <scope>NUCLEOTIDE SEQUENCE [LARGE SCALE GENOMIC DNA]</scope>
    <source>
        <strain>OS155 / ATCC BAA-1091</strain>
    </source>
</reference>
<keyword id="KW-0143">Chaperone</keyword>
<keyword id="KW-0963">Cytoplasm</keyword>
<keyword id="KW-1185">Reference proteome</keyword>
<keyword id="KW-0690">Ribosome biogenesis</keyword>
<keyword id="KW-0698">rRNA processing</keyword>